<evidence type="ECO:0000255" key="1">
    <source>
        <dbReference type="HAMAP-Rule" id="MF_01218"/>
    </source>
</evidence>
<protein>
    <recommendedName>
        <fullName evidence="1">Uracil phosphoribosyltransferase</fullName>
        <ecNumber evidence="1">2.4.2.9</ecNumber>
    </recommendedName>
    <alternativeName>
        <fullName evidence="1">UMP pyrophosphorylase</fullName>
    </alternativeName>
    <alternativeName>
        <fullName evidence="1">UPRTase</fullName>
    </alternativeName>
</protein>
<keyword id="KW-0021">Allosteric enzyme</keyword>
<keyword id="KW-0328">Glycosyltransferase</keyword>
<keyword id="KW-0342">GTP-binding</keyword>
<keyword id="KW-0460">Magnesium</keyword>
<keyword id="KW-0547">Nucleotide-binding</keyword>
<keyword id="KW-0808">Transferase</keyword>
<feature type="chain" id="PRO_1000053720" description="Uracil phosphoribosyltransferase">
    <location>
        <begin position="1"/>
        <end position="209"/>
    </location>
</feature>
<feature type="binding site" evidence="1">
    <location>
        <position position="79"/>
    </location>
    <ligand>
        <name>5-phospho-alpha-D-ribose 1-diphosphate</name>
        <dbReference type="ChEBI" id="CHEBI:58017"/>
    </ligand>
</feature>
<feature type="binding site" evidence="1">
    <location>
        <position position="104"/>
    </location>
    <ligand>
        <name>5-phospho-alpha-D-ribose 1-diphosphate</name>
        <dbReference type="ChEBI" id="CHEBI:58017"/>
    </ligand>
</feature>
<feature type="binding site" evidence="1">
    <location>
        <begin position="131"/>
        <end position="139"/>
    </location>
    <ligand>
        <name>5-phospho-alpha-D-ribose 1-diphosphate</name>
        <dbReference type="ChEBI" id="CHEBI:58017"/>
    </ligand>
</feature>
<feature type="binding site" evidence="1">
    <location>
        <position position="194"/>
    </location>
    <ligand>
        <name>uracil</name>
        <dbReference type="ChEBI" id="CHEBI:17568"/>
    </ligand>
</feature>
<feature type="binding site" evidence="1">
    <location>
        <begin position="199"/>
        <end position="201"/>
    </location>
    <ligand>
        <name>uracil</name>
        <dbReference type="ChEBI" id="CHEBI:17568"/>
    </ligand>
</feature>
<feature type="binding site" evidence="1">
    <location>
        <position position="200"/>
    </location>
    <ligand>
        <name>5-phospho-alpha-D-ribose 1-diphosphate</name>
        <dbReference type="ChEBI" id="CHEBI:58017"/>
    </ligand>
</feature>
<reference key="1">
    <citation type="journal article" date="2007" name="PLoS ONE">
        <title>Complete genomic characterization of a pathogenic A.II strain of Francisella tularensis subspecies tularensis.</title>
        <authorList>
            <person name="Beckstrom-Sternberg S.M."/>
            <person name="Auerbach R.K."/>
            <person name="Godbole S."/>
            <person name="Pearson J.V."/>
            <person name="Beckstrom-Sternberg J.S."/>
            <person name="Deng Z."/>
            <person name="Munk C."/>
            <person name="Kubota K."/>
            <person name="Zhou Y."/>
            <person name="Bruce D."/>
            <person name="Noronha J."/>
            <person name="Scheuermann R.H."/>
            <person name="Wang A."/>
            <person name="Wei X."/>
            <person name="Wang J."/>
            <person name="Hao J."/>
            <person name="Wagner D.M."/>
            <person name="Brettin T.S."/>
            <person name="Brown N."/>
            <person name="Gilna P."/>
            <person name="Keim P.S."/>
        </authorList>
    </citation>
    <scope>NUCLEOTIDE SEQUENCE [LARGE SCALE GENOMIC DNA]</scope>
    <source>
        <strain>WY96-3418</strain>
    </source>
</reference>
<proteinExistence type="inferred from homology"/>
<accession>A4IZ90</accession>
<dbReference type="EC" id="2.4.2.9" evidence="1"/>
<dbReference type="EMBL" id="CP000608">
    <property type="protein sequence ID" value="ABO47241.1"/>
    <property type="molecule type" value="Genomic_DNA"/>
</dbReference>
<dbReference type="RefSeq" id="WP_003026826.1">
    <property type="nucleotide sequence ID" value="NC_009257.1"/>
</dbReference>
<dbReference type="SMR" id="A4IZ90"/>
<dbReference type="KEGG" id="ftw:FTW_1524"/>
<dbReference type="HOGENOM" id="CLU_067096_2_2_6"/>
<dbReference type="UniPathway" id="UPA00574">
    <property type="reaction ID" value="UER00636"/>
</dbReference>
<dbReference type="GO" id="GO:0005525">
    <property type="term" value="F:GTP binding"/>
    <property type="evidence" value="ECO:0007669"/>
    <property type="project" value="UniProtKB-KW"/>
</dbReference>
<dbReference type="GO" id="GO:0000287">
    <property type="term" value="F:magnesium ion binding"/>
    <property type="evidence" value="ECO:0007669"/>
    <property type="project" value="UniProtKB-UniRule"/>
</dbReference>
<dbReference type="GO" id="GO:0004845">
    <property type="term" value="F:uracil phosphoribosyltransferase activity"/>
    <property type="evidence" value="ECO:0007669"/>
    <property type="project" value="UniProtKB-UniRule"/>
</dbReference>
<dbReference type="GO" id="GO:0044206">
    <property type="term" value="P:UMP salvage"/>
    <property type="evidence" value="ECO:0007669"/>
    <property type="project" value="UniProtKB-UniRule"/>
</dbReference>
<dbReference type="GO" id="GO:0006223">
    <property type="term" value="P:uracil salvage"/>
    <property type="evidence" value="ECO:0007669"/>
    <property type="project" value="InterPro"/>
</dbReference>
<dbReference type="CDD" id="cd06223">
    <property type="entry name" value="PRTases_typeI"/>
    <property type="match status" value="1"/>
</dbReference>
<dbReference type="FunFam" id="3.40.50.2020:FF:000003">
    <property type="entry name" value="Uracil phosphoribosyltransferase"/>
    <property type="match status" value="1"/>
</dbReference>
<dbReference type="Gene3D" id="3.40.50.2020">
    <property type="match status" value="1"/>
</dbReference>
<dbReference type="HAMAP" id="MF_01218_B">
    <property type="entry name" value="Upp_B"/>
    <property type="match status" value="1"/>
</dbReference>
<dbReference type="InterPro" id="IPR000836">
    <property type="entry name" value="PRibTrfase_dom"/>
</dbReference>
<dbReference type="InterPro" id="IPR029057">
    <property type="entry name" value="PRTase-like"/>
</dbReference>
<dbReference type="InterPro" id="IPR034332">
    <property type="entry name" value="Upp_B"/>
</dbReference>
<dbReference type="InterPro" id="IPR050054">
    <property type="entry name" value="UPRTase/APRTase"/>
</dbReference>
<dbReference type="InterPro" id="IPR005765">
    <property type="entry name" value="Ura_phspho_trans"/>
</dbReference>
<dbReference type="NCBIfam" id="NF001097">
    <property type="entry name" value="PRK00129.1"/>
    <property type="match status" value="1"/>
</dbReference>
<dbReference type="NCBIfam" id="TIGR01091">
    <property type="entry name" value="upp"/>
    <property type="match status" value="1"/>
</dbReference>
<dbReference type="PANTHER" id="PTHR32315">
    <property type="entry name" value="ADENINE PHOSPHORIBOSYLTRANSFERASE"/>
    <property type="match status" value="1"/>
</dbReference>
<dbReference type="PANTHER" id="PTHR32315:SF4">
    <property type="entry name" value="URACIL PHOSPHORIBOSYLTRANSFERASE, CHLOROPLASTIC"/>
    <property type="match status" value="1"/>
</dbReference>
<dbReference type="Pfam" id="PF14681">
    <property type="entry name" value="UPRTase"/>
    <property type="match status" value="1"/>
</dbReference>
<dbReference type="SUPFAM" id="SSF53271">
    <property type="entry name" value="PRTase-like"/>
    <property type="match status" value="1"/>
</dbReference>
<organism>
    <name type="scientific">Francisella tularensis subsp. tularensis (strain WY96-3418)</name>
    <dbReference type="NCBI Taxonomy" id="418136"/>
    <lineage>
        <taxon>Bacteria</taxon>
        <taxon>Pseudomonadati</taxon>
        <taxon>Pseudomonadota</taxon>
        <taxon>Gammaproteobacteria</taxon>
        <taxon>Thiotrichales</taxon>
        <taxon>Francisellaceae</taxon>
        <taxon>Francisella</taxon>
    </lineage>
</organism>
<name>UPP_FRATW</name>
<comment type="function">
    <text evidence="1">Catalyzes the conversion of uracil and 5-phospho-alpha-D-ribose 1-diphosphate (PRPP) to UMP and diphosphate.</text>
</comment>
<comment type="catalytic activity">
    <reaction evidence="1">
        <text>UMP + diphosphate = 5-phospho-alpha-D-ribose 1-diphosphate + uracil</text>
        <dbReference type="Rhea" id="RHEA:13017"/>
        <dbReference type="ChEBI" id="CHEBI:17568"/>
        <dbReference type="ChEBI" id="CHEBI:33019"/>
        <dbReference type="ChEBI" id="CHEBI:57865"/>
        <dbReference type="ChEBI" id="CHEBI:58017"/>
        <dbReference type="EC" id="2.4.2.9"/>
    </reaction>
</comment>
<comment type="cofactor">
    <cofactor evidence="1">
        <name>Mg(2+)</name>
        <dbReference type="ChEBI" id="CHEBI:18420"/>
    </cofactor>
    <text evidence="1">Binds 1 Mg(2+) ion per subunit. The magnesium is bound as Mg-PRPP.</text>
</comment>
<comment type="activity regulation">
    <text evidence="1">Allosterically activated by GTP.</text>
</comment>
<comment type="pathway">
    <text evidence="1">Pyrimidine metabolism; UMP biosynthesis via salvage pathway; UMP from uracil: step 1/1.</text>
</comment>
<comment type="similarity">
    <text evidence="1">Belongs to the UPRTase family.</text>
</comment>
<sequence>MKVVEISHPMVKHKLGLMRAASISTQEFRRLTKEITSLLTYEVTAGFELEKTEILGWQGENIEIDQIKGKKLTVVPILRAGLGMMDGVFEHVPAAKVSMVGMYRDEKTAKPVAYFAKLCDKLDERVALIVDPMLATGGSMIATVSLLKKAGSKDIKIITLVSAPEGIDALAKAHPDVELYTASIDSHLNDKKYIIPGLGDAGDKIFGTK</sequence>
<gene>
    <name evidence="1" type="primary">upp</name>
    <name type="ordered locus">FTW_1524</name>
</gene>